<protein>
    <recommendedName>
        <fullName evidence="1">Small ribosomal subunit protein uS13</fullName>
    </recommendedName>
    <alternativeName>
        <fullName evidence="3">30S ribosomal protein S13</fullName>
    </alternativeName>
</protein>
<keyword id="KW-1185">Reference proteome</keyword>
<keyword id="KW-0687">Ribonucleoprotein</keyword>
<keyword id="KW-0689">Ribosomal protein</keyword>
<keyword id="KW-0694">RNA-binding</keyword>
<keyword id="KW-0699">rRNA-binding</keyword>
<keyword id="KW-0820">tRNA-binding</keyword>
<gene>
    <name evidence="1" type="primary">rpsM</name>
    <name type="ordered locus">ML1960</name>
    <name type="ORF">MLCB1222.30c</name>
</gene>
<comment type="function">
    <text evidence="1">Located at the top of the head of the 30S subunit, it contacts several helices of the 16S rRNA. In the 70S ribosome it contacts the 23S rRNA (bridge B1a) and protein L5 of the 50S subunit (bridge B1b), connecting the 2 subunits; these bridges are implicated in subunit movement. Contacts the tRNAs in the A and P-sites.</text>
</comment>
<comment type="subunit">
    <text evidence="1">Part of the 30S ribosomal subunit. Forms a loose heterodimer with protein S19. Forms two bridges to the 50S subunit in the 70S ribosome.</text>
</comment>
<comment type="similarity">
    <text evidence="1">Belongs to the universal ribosomal protein uS13 family.</text>
</comment>
<name>RS13_MYCLE</name>
<feature type="chain" id="PRO_0000132113" description="Small ribosomal subunit protein uS13">
    <location>
        <begin position="1"/>
        <end position="124"/>
    </location>
</feature>
<feature type="region of interest" description="Disordered" evidence="2">
    <location>
        <begin position="98"/>
        <end position="124"/>
    </location>
</feature>
<sequence>MARLVGVDLPRDKRMEVALTYIYGIGRTRANEILEATGIERDLRTRDLTDDQLTHLRDYIEANLKVEGDLRREVQADIRRKMEIGCYQGLRHRRGLPVRGQRTKTNARTRKGPKRTIAGKKKAR</sequence>
<reference key="1">
    <citation type="journal article" date="2001" name="Nature">
        <title>Massive gene decay in the leprosy bacillus.</title>
        <authorList>
            <person name="Cole S.T."/>
            <person name="Eiglmeier K."/>
            <person name="Parkhill J."/>
            <person name="James K.D."/>
            <person name="Thomson N.R."/>
            <person name="Wheeler P.R."/>
            <person name="Honore N."/>
            <person name="Garnier T."/>
            <person name="Churcher C.M."/>
            <person name="Harris D.E."/>
            <person name="Mungall K.L."/>
            <person name="Basham D."/>
            <person name="Brown D."/>
            <person name="Chillingworth T."/>
            <person name="Connor R."/>
            <person name="Davies R.M."/>
            <person name="Devlin K."/>
            <person name="Duthoy S."/>
            <person name="Feltwell T."/>
            <person name="Fraser A."/>
            <person name="Hamlin N."/>
            <person name="Holroyd S."/>
            <person name="Hornsby T."/>
            <person name="Jagels K."/>
            <person name="Lacroix C."/>
            <person name="Maclean J."/>
            <person name="Moule S."/>
            <person name="Murphy L.D."/>
            <person name="Oliver K."/>
            <person name="Quail M.A."/>
            <person name="Rajandream M.A."/>
            <person name="Rutherford K.M."/>
            <person name="Rutter S."/>
            <person name="Seeger K."/>
            <person name="Simon S."/>
            <person name="Simmonds M."/>
            <person name="Skelton J."/>
            <person name="Squares R."/>
            <person name="Squares S."/>
            <person name="Stevens K."/>
            <person name="Taylor K."/>
            <person name="Whitehead S."/>
            <person name="Woodward J.R."/>
            <person name="Barrell B.G."/>
        </authorList>
    </citation>
    <scope>NUCLEOTIDE SEQUENCE [LARGE SCALE GENOMIC DNA]</scope>
    <source>
        <strain>TN</strain>
    </source>
</reference>
<accession>Q9X7A1</accession>
<organism>
    <name type="scientific">Mycobacterium leprae (strain TN)</name>
    <dbReference type="NCBI Taxonomy" id="272631"/>
    <lineage>
        <taxon>Bacteria</taxon>
        <taxon>Bacillati</taxon>
        <taxon>Actinomycetota</taxon>
        <taxon>Actinomycetes</taxon>
        <taxon>Mycobacteriales</taxon>
        <taxon>Mycobacteriaceae</taxon>
        <taxon>Mycobacterium</taxon>
    </lineage>
</organism>
<evidence type="ECO:0000255" key="1">
    <source>
        <dbReference type="HAMAP-Rule" id="MF_01315"/>
    </source>
</evidence>
<evidence type="ECO:0000256" key="2">
    <source>
        <dbReference type="SAM" id="MobiDB-lite"/>
    </source>
</evidence>
<evidence type="ECO:0000305" key="3"/>
<proteinExistence type="inferred from homology"/>
<dbReference type="EMBL" id="AL049491">
    <property type="protein sequence ID" value="CAB39836.1"/>
    <property type="molecule type" value="Genomic_DNA"/>
</dbReference>
<dbReference type="EMBL" id="AL583923">
    <property type="protein sequence ID" value="CAC30915.1"/>
    <property type="molecule type" value="Genomic_DNA"/>
</dbReference>
<dbReference type="PIR" id="C87154">
    <property type="entry name" value="C87154"/>
</dbReference>
<dbReference type="RefSeq" id="NP_302325.1">
    <property type="nucleotide sequence ID" value="NC_002677.1"/>
</dbReference>
<dbReference type="RefSeq" id="WP_010908646.1">
    <property type="nucleotide sequence ID" value="NC_002677.1"/>
</dbReference>
<dbReference type="SMR" id="Q9X7A1"/>
<dbReference type="STRING" id="272631.gene:17575812"/>
<dbReference type="KEGG" id="mle:ML1960"/>
<dbReference type="PATRIC" id="fig|272631.5.peg.3710"/>
<dbReference type="Leproma" id="ML1960"/>
<dbReference type="eggNOG" id="COG0099">
    <property type="taxonomic scope" value="Bacteria"/>
</dbReference>
<dbReference type="HOGENOM" id="CLU_103849_1_2_11"/>
<dbReference type="OrthoDB" id="9803610at2"/>
<dbReference type="Proteomes" id="UP000000806">
    <property type="component" value="Chromosome"/>
</dbReference>
<dbReference type="GO" id="GO:0005829">
    <property type="term" value="C:cytosol"/>
    <property type="evidence" value="ECO:0007669"/>
    <property type="project" value="TreeGrafter"/>
</dbReference>
<dbReference type="GO" id="GO:0015935">
    <property type="term" value="C:small ribosomal subunit"/>
    <property type="evidence" value="ECO:0007669"/>
    <property type="project" value="TreeGrafter"/>
</dbReference>
<dbReference type="GO" id="GO:0019843">
    <property type="term" value="F:rRNA binding"/>
    <property type="evidence" value="ECO:0007669"/>
    <property type="project" value="UniProtKB-UniRule"/>
</dbReference>
<dbReference type="GO" id="GO:0003735">
    <property type="term" value="F:structural constituent of ribosome"/>
    <property type="evidence" value="ECO:0007669"/>
    <property type="project" value="InterPro"/>
</dbReference>
<dbReference type="GO" id="GO:0000049">
    <property type="term" value="F:tRNA binding"/>
    <property type="evidence" value="ECO:0007669"/>
    <property type="project" value="UniProtKB-UniRule"/>
</dbReference>
<dbReference type="GO" id="GO:0006412">
    <property type="term" value="P:translation"/>
    <property type="evidence" value="ECO:0007669"/>
    <property type="project" value="UniProtKB-UniRule"/>
</dbReference>
<dbReference type="FunFam" id="1.10.8.50:FF:000001">
    <property type="entry name" value="30S ribosomal protein S13"/>
    <property type="match status" value="1"/>
</dbReference>
<dbReference type="FunFam" id="4.10.910.10:FF:000001">
    <property type="entry name" value="30S ribosomal protein S13"/>
    <property type="match status" value="1"/>
</dbReference>
<dbReference type="Gene3D" id="1.10.8.50">
    <property type="match status" value="1"/>
</dbReference>
<dbReference type="Gene3D" id="4.10.910.10">
    <property type="entry name" value="30s ribosomal protein s13, domain 2"/>
    <property type="match status" value="1"/>
</dbReference>
<dbReference type="HAMAP" id="MF_01315">
    <property type="entry name" value="Ribosomal_uS13"/>
    <property type="match status" value="1"/>
</dbReference>
<dbReference type="InterPro" id="IPR027437">
    <property type="entry name" value="Rbsml_uS13_C"/>
</dbReference>
<dbReference type="InterPro" id="IPR001892">
    <property type="entry name" value="Ribosomal_uS13"/>
</dbReference>
<dbReference type="InterPro" id="IPR010979">
    <property type="entry name" value="Ribosomal_uS13-like_H2TH"/>
</dbReference>
<dbReference type="InterPro" id="IPR019980">
    <property type="entry name" value="Ribosomal_uS13_bac-type"/>
</dbReference>
<dbReference type="InterPro" id="IPR018269">
    <property type="entry name" value="Ribosomal_uS13_CS"/>
</dbReference>
<dbReference type="NCBIfam" id="TIGR03631">
    <property type="entry name" value="uS13_bact"/>
    <property type="match status" value="1"/>
</dbReference>
<dbReference type="PANTHER" id="PTHR10871">
    <property type="entry name" value="30S RIBOSOMAL PROTEIN S13/40S RIBOSOMAL PROTEIN S18"/>
    <property type="match status" value="1"/>
</dbReference>
<dbReference type="PANTHER" id="PTHR10871:SF1">
    <property type="entry name" value="SMALL RIBOSOMAL SUBUNIT PROTEIN US13M"/>
    <property type="match status" value="1"/>
</dbReference>
<dbReference type="Pfam" id="PF00416">
    <property type="entry name" value="Ribosomal_S13"/>
    <property type="match status" value="1"/>
</dbReference>
<dbReference type="PIRSF" id="PIRSF002134">
    <property type="entry name" value="Ribosomal_S13"/>
    <property type="match status" value="1"/>
</dbReference>
<dbReference type="SUPFAM" id="SSF46946">
    <property type="entry name" value="S13-like H2TH domain"/>
    <property type="match status" value="1"/>
</dbReference>
<dbReference type="PROSITE" id="PS00646">
    <property type="entry name" value="RIBOSOMAL_S13_1"/>
    <property type="match status" value="1"/>
</dbReference>
<dbReference type="PROSITE" id="PS50159">
    <property type="entry name" value="RIBOSOMAL_S13_2"/>
    <property type="match status" value="1"/>
</dbReference>